<gene>
    <name evidence="1" type="primary">fliT</name>
    <name type="ordered locus">SeD_A1281</name>
</gene>
<accession>B5FRX0</accession>
<reference key="1">
    <citation type="journal article" date="2011" name="J. Bacteriol.">
        <title>Comparative genomics of 28 Salmonella enterica isolates: evidence for CRISPR-mediated adaptive sublineage evolution.</title>
        <authorList>
            <person name="Fricke W.F."/>
            <person name="Mammel M.K."/>
            <person name="McDermott P.F."/>
            <person name="Tartera C."/>
            <person name="White D.G."/>
            <person name="Leclerc J.E."/>
            <person name="Ravel J."/>
            <person name="Cebula T.A."/>
        </authorList>
    </citation>
    <scope>NUCLEOTIDE SEQUENCE [LARGE SCALE GENOMIC DNA]</scope>
    <source>
        <strain>CT_02021853</strain>
    </source>
</reference>
<dbReference type="EMBL" id="CP001144">
    <property type="protein sequence ID" value="ACH76405.1"/>
    <property type="molecule type" value="Genomic_DNA"/>
</dbReference>
<dbReference type="RefSeq" id="WP_000204899.1">
    <property type="nucleotide sequence ID" value="NC_011205.1"/>
</dbReference>
<dbReference type="SMR" id="B5FRX0"/>
<dbReference type="KEGG" id="sed:SeD_A1281"/>
<dbReference type="HOGENOM" id="CLU_155793_1_0_6"/>
<dbReference type="Proteomes" id="UP000008322">
    <property type="component" value="Chromosome"/>
</dbReference>
<dbReference type="GO" id="GO:0005829">
    <property type="term" value="C:cytosol"/>
    <property type="evidence" value="ECO:0007669"/>
    <property type="project" value="UniProtKB-SubCell"/>
</dbReference>
<dbReference type="GO" id="GO:0044781">
    <property type="term" value="P:bacterial-type flagellum organization"/>
    <property type="evidence" value="ECO:0007669"/>
    <property type="project" value="UniProtKB-KW"/>
</dbReference>
<dbReference type="GO" id="GO:1902209">
    <property type="term" value="P:negative regulation of bacterial-type flagellum assembly"/>
    <property type="evidence" value="ECO:0007669"/>
    <property type="project" value="UniProtKB-UniRule"/>
</dbReference>
<dbReference type="GO" id="GO:0006457">
    <property type="term" value="P:protein folding"/>
    <property type="evidence" value="ECO:0007669"/>
    <property type="project" value="UniProtKB-UniRule"/>
</dbReference>
<dbReference type="FunFam" id="1.20.58.380:FF:000002">
    <property type="entry name" value="Flagellar protein FliT"/>
    <property type="match status" value="1"/>
</dbReference>
<dbReference type="Gene3D" id="1.20.58.380">
    <property type="entry name" value="Flagellar protein flit"/>
    <property type="match status" value="1"/>
</dbReference>
<dbReference type="HAMAP" id="MF_01180">
    <property type="entry name" value="FliT"/>
    <property type="match status" value="1"/>
</dbReference>
<dbReference type="InterPro" id="IPR008622">
    <property type="entry name" value="FliT"/>
</dbReference>
<dbReference type="NCBIfam" id="NF007836">
    <property type="entry name" value="PRK10548.1"/>
    <property type="match status" value="1"/>
</dbReference>
<dbReference type="Pfam" id="PF05400">
    <property type="entry name" value="FliT"/>
    <property type="match status" value="1"/>
</dbReference>
<comment type="function">
    <text evidence="1">Dual-function protein that regulates the transcription of class 2 flagellar operons and that also acts as an export chaperone for the filament-capping protein FliD. As a transcriptional regulator, acts as an anti-FlhDC factor; it directly binds FlhC, thus inhibiting the binding of the FlhC/FlhD complex to class 2 promoters, resulting in decreased expression of class 2 flagellar operons. As a chaperone, effects FliD transition to the membrane by preventing its premature polymerization, and by directing it to the export apparatus.</text>
</comment>
<comment type="subunit">
    <text evidence="1">Homodimer. Interacts with FliD and FlhC.</text>
</comment>
<comment type="subcellular location">
    <subcellularLocation>
        <location evidence="1">Cytoplasm</location>
        <location evidence="1">Cytosol</location>
    </subcellularLocation>
</comment>
<comment type="similarity">
    <text evidence="1">Belongs to the FliT family.</text>
</comment>
<protein>
    <recommendedName>
        <fullName evidence="1">Flagellar protein FliT</fullName>
    </recommendedName>
</protein>
<feature type="chain" id="PRO_1000138181" description="Flagellar protein FliT">
    <location>
        <begin position="1"/>
        <end position="122"/>
    </location>
</feature>
<feature type="region of interest" description="Required for homodimerization" evidence="1">
    <location>
        <begin position="1"/>
        <end position="50"/>
    </location>
</feature>
<feature type="region of interest" description="FliD binding" evidence="1">
    <location>
        <begin position="60"/>
        <end position="98"/>
    </location>
</feature>
<organism>
    <name type="scientific">Salmonella dublin (strain CT_02021853)</name>
    <dbReference type="NCBI Taxonomy" id="439851"/>
    <lineage>
        <taxon>Bacteria</taxon>
        <taxon>Pseudomonadati</taxon>
        <taxon>Pseudomonadota</taxon>
        <taxon>Gammaproteobacteria</taxon>
        <taxon>Enterobacterales</taxon>
        <taxon>Enterobacteriaceae</taxon>
        <taxon>Salmonella</taxon>
    </lineage>
</organism>
<keyword id="KW-1005">Bacterial flagellum biogenesis</keyword>
<keyword id="KW-0143">Chaperone</keyword>
<keyword id="KW-0963">Cytoplasm</keyword>
<keyword id="KW-0678">Repressor</keyword>
<keyword id="KW-0804">Transcription</keyword>
<keyword id="KW-0805">Transcription regulation</keyword>
<evidence type="ECO:0000255" key="1">
    <source>
        <dbReference type="HAMAP-Rule" id="MF_01180"/>
    </source>
</evidence>
<sequence length="122" mass="13705">MTSTVEFINRWQRIALLSQSLLELAQRGEWDLLLQQEVSYLQSIETVMEKQTPPGITRSIQDMVAGYIKQTLDNEQLLKGLLQQRLDELSSLIGQSTRQKSLNNAYGRLSGMLLVPDAPGAS</sequence>
<proteinExistence type="inferred from homology"/>
<name>FLIT_SALDC</name>